<organism>
    <name type="scientific">Nitratidesulfovibrio vulgaris (strain DSM 19637 / Miyazaki F)</name>
    <name type="common">Desulfovibrio vulgaris</name>
    <dbReference type="NCBI Taxonomy" id="883"/>
    <lineage>
        <taxon>Bacteria</taxon>
        <taxon>Pseudomonadati</taxon>
        <taxon>Thermodesulfobacteriota</taxon>
        <taxon>Desulfovibrionia</taxon>
        <taxon>Desulfovibrionales</taxon>
        <taxon>Desulfovibrionaceae</taxon>
        <taxon>Nitratidesulfovibrio</taxon>
    </lineage>
</organism>
<comment type="function">
    <text evidence="1">Involved in the regulation of the intracellular balance of NAD and NADP, and is a key enzyme in the biosynthesis of NADP. Catalyzes specifically the phosphorylation on 2'-hydroxyl of the adenosine moiety of NAD to yield NADP.</text>
</comment>
<comment type="catalytic activity">
    <reaction evidence="1">
        <text>NAD(+) + ATP = ADP + NADP(+) + H(+)</text>
        <dbReference type="Rhea" id="RHEA:18629"/>
        <dbReference type="ChEBI" id="CHEBI:15378"/>
        <dbReference type="ChEBI" id="CHEBI:30616"/>
        <dbReference type="ChEBI" id="CHEBI:57540"/>
        <dbReference type="ChEBI" id="CHEBI:58349"/>
        <dbReference type="ChEBI" id="CHEBI:456216"/>
        <dbReference type="EC" id="2.7.1.23"/>
    </reaction>
</comment>
<comment type="cofactor">
    <cofactor evidence="1">
        <name>a divalent metal cation</name>
        <dbReference type="ChEBI" id="CHEBI:60240"/>
    </cofactor>
</comment>
<comment type="subcellular location">
    <subcellularLocation>
        <location evidence="1">Cytoplasm</location>
    </subcellularLocation>
</comment>
<comment type="similarity">
    <text evidence="1">Belongs to the NAD kinase family.</text>
</comment>
<feature type="chain" id="PRO_1000120851" description="NAD kinase">
    <location>
        <begin position="1"/>
        <end position="283"/>
    </location>
</feature>
<feature type="active site" description="Proton acceptor" evidence="1">
    <location>
        <position position="65"/>
    </location>
</feature>
<feature type="binding site" evidence="1">
    <location>
        <begin position="65"/>
        <end position="66"/>
    </location>
    <ligand>
        <name>NAD(+)</name>
        <dbReference type="ChEBI" id="CHEBI:57540"/>
    </ligand>
</feature>
<feature type="binding site" evidence="1">
    <location>
        <begin position="139"/>
        <end position="140"/>
    </location>
    <ligand>
        <name>NAD(+)</name>
        <dbReference type="ChEBI" id="CHEBI:57540"/>
    </ligand>
</feature>
<feature type="binding site" evidence="1">
    <location>
        <position position="150"/>
    </location>
    <ligand>
        <name>NAD(+)</name>
        <dbReference type="ChEBI" id="CHEBI:57540"/>
    </ligand>
</feature>
<feature type="binding site" evidence="1">
    <location>
        <position position="167"/>
    </location>
    <ligand>
        <name>NAD(+)</name>
        <dbReference type="ChEBI" id="CHEBI:57540"/>
    </ligand>
</feature>
<feature type="binding site" evidence="1">
    <location>
        <position position="169"/>
    </location>
    <ligand>
        <name>NAD(+)</name>
        <dbReference type="ChEBI" id="CHEBI:57540"/>
    </ligand>
</feature>
<feature type="binding site" evidence="1">
    <location>
        <begin position="180"/>
        <end position="185"/>
    </location>
    <ligand>
        <name>NAD(+)</name>
        <dbReference type="ChEBI" id="CHEBI:57540"/>
    </ligand>
</feature>
<feature type="binding site" evidence="1">
    <location>
        <position position="239"/>
    </location>
    <ligand>
        <name>NAD(+)</name>
        <dbReference type="ChEBI" id="CHEBI:57540"/>
    </ligand>
</feature>
<name>NADK_NITV9</name>
<reference key="1">
    <citation type="submission" date="2008-10" db="EMBL/GenBank/DDBJ databases">
        <title>Complete sequence of Desulfovibrio vulgaris str. 'Miyazaki F'.</title>
        <authorList>
            <person name="Lucas S."/>
            <person name="Copeland A."/>
            <person name="Lapidus A."/>
            <person name="Glavina del Rio T."/>
            <person name="Dalin E."/>
            <person name="Tice H."/>
            <person name="Bruce D."/>
            <person name="Goodwin L."/>
            <person name="Pitluck S."/>
            <person name="Sims D."/>
            <person name="Brettin T."/>
            <person name="Detter J.C."/>
            <person name="Han C."/>
            <person name="Larimer F."/>
            <person name="Land M."/>
            <person name="Hauser L."/>
            <person name="Kyrpides N."/>
            <person name="Mikhailova N."/>
            <person name="Hazen T.C."/>
            <person name="Richardson P."/>
        </authorList>
    </citation>
    <scope>NUCLEOTIDE SEQUENCE [LARGE SCALE GENOMIC DNA]</scope>
    <source>
        <strain>DSM 19637 / Miyazaki F</strain>
    </source>
</reference>
<gene>
    <name evidence="1" type="primary">nadK</name>
    <name type="ordered locus">DvMF_0581</name>
</gene>
<keyword id="KW-0067">ATP-binding</keyword>
<keyword id="KW-0963">Cytoplasm</keyword>
<keyword id="KW-0418">Kinase</keyword>
<keyword id="KW-0520">NAD</keyword>
<keyword id="KW-0521">NADP</keyword>
<keyword id="KW-0547">Nucleotide-binding</keyword>
<keyword id="KW-0808">Transferase</keyword>
<sequence>MHTALRSILIVTKSGHREAEALGERMRAWLAARGLSARVVENTGDAVSLAVAGQECSLALVLGGDGTILGVARRLLGSGVPLLGVNLGKVGFLAEVAATRWESSLERLLSGGVTVQERLALSFRVERDGATVHSGGAVNDVVINRGILARVINLDLRVGSERLGELRADGLIVSTPTGATGYSVSARGPLVHPQLHVYTVTPICPFLNNLLPLVLPGEARLSVTVRDRTNEVYLTQDGQEGYALQAGDVVHVERAPGGMLFATIEELSYYRKLKAKGFIKDQA</sequence>
<proteinExistence type="inferred from homology"/>
<dbReference type="EC" id="2.7.1.23" evidence="1"/>
<dbReference type="EMBL" id="CP001197">
    <property type="protein sequence ID" value="ACL07538.1"/>
    <property type="molecule type" value="Genomic_DNA"/>
</dbReference>
<dbReference type="SMR" id="B8DKV9"/>
<dbReference type="STRING" id="883.DvMF_0581"/>
<dbReference type="KEGG" id="dvm:DvMF_0581"/>
<dbReference type="eggNOG" id="COG0061">
    <property type="taxonomic scope" value="Bacteria"/>
</dbReference>
<dbReference type="HOGENOM" id="CLU_008831_0_0_7"/>
<dbReference type="OrthoDB" id="9774737at2"/>
<dbReference type="GO" id="GO:0005737">
    <property type="term" value="C:cytoplasm"/>
    <property type="evidence" value="ECO:0007669"/>
    <property type="project" value="UniProtKB-SubCell"/>
</dbReference>
<dbReference type="GO" id="GO:0005524">
    <property type="term" value="F:ATP binding"/>
    <property type="evidence" value="ECO:0007669"/>
    <property type="project" value="UniProtKB-KW"/>
</dbReference>
<dbReference type="GO" id="GO:0046872">
    <property type="term" value="F:metal ion binding"/>
    <property type="evidence" value="ECO:0007669"/>
    <property type="project" value="UniProtKB-UniRule"/>
</dbReference>
<dbReference type="GO" id="GO:0051287">
    <property type="term" value="F:NAD binding"/>
    <property type="evidence" value="ECO:0007669"/>
    <property type="project" value="UniProtKB-ARBA"/>
</dbReference>
<dbReference type="GO" id="GO:0003951">
    <property type="term" value="F:NAD+ kinase activity"/>
    <property type="evidence" value="ECO:0007669"/>
    <property type="project" value="UniProtKB-UniRule"/>
</dbReference>
<dbReference type="GO" id="GO:0019674">
    <property type="term" value="P:NAD metabolic process"/>
    <property type="evidence" value="ECO:0007669"/>
    <property type="project" value="InterPro"/>
</dbReference>
<dbReference type="GO" id="GO:0006741">
    <property type="term" value="P:NADP biosynthetic process"/>
    <property type="evidence" value="ECO:0007669"/>
    <property type="project" value="UniProtKB-UniRule"/>
</dbReference>
<dbReference type="Gene3D" id="3.40.50.10330">
    <property type="entry name" value="Probable inorganic polyphosphate/atp-NAD kinase, domain 1"/>
    <property type="match status" value="1"/>
</dbReference>
<dbReference type="Gene3D" id="2.60.200.30">
    <property type="entry name" value="Probable inorganic polyphosphate/atp-NAD kinase, domain 2"/>
    <property type="match status" value="1"/>
</dbReference>
<dbReference type="HAMAP" id="MF_00361">
    <property type="entry name" value="NAD_kinase"/>
    <property type="match status" value="1"/>
</dbReference>
<dbReference type="InterPro" id="IPR017438">
    <property type="entry name" value="ATP-NAD_kinase_N"/>
</dbReference>
<dbReference type="InterPro" id="IPR017437">
    <property type="entry name" value="ATP-NAD_kinase_PpnK-typ_C"/>
</dbReference>
<dbReference type="InterPro" id="IPR016064">
    <property type="entry name" value="NAD/diacylglycerol_kinase_sf"/>
</dbReference>
<dbReference type="InterPro" id="IPR002504">
    <property type="entry name" value="NADK"/>
</dbReference>
<dbReference type="PANTHER" id="PTHR20275">
    <property type="entry name" value="NAD KINASE"/>
    <property type="match status" value="1"/>
</dbReference>
<dbReference type="PANTHER" id="PTHR20275:SF0">
    <property type="entry name" value="NAD KINASE"/>
    <property type="match status" value="1"/>
</dbReference>
<dbReference type="Pfam" id="PF01513">
    <property type="entry name" value="NAD_kinase"/>
    <property type="match status" value="1"/>
</dbReference>
<dbReference type="Pfam" id="PF20143">
    <property type="entry name" value="NAD_kinase_C"/>
    <property type="match status" value="1"/>
</dbReference>
<dbReference type="SUPFAM" id="SSF111331">
    <property type="entry name" value="NAD kinase/diacylglycerol kinase-like"/>
    <property type="match status" value="1"/>
</dbReference>
<accession>B8DKV9</accession>
<evidence type="ECO:0000255" key="1">
    <source>
        <dbReference type="HAMAP-Rule" id="MF_00361"/>
    </source>
</evidence>
<protein>
    <recommendedName>
        <fullName evidence="1">NAD kinase</fullName>
        <ecNumber evidence="1">2.7.1.23</ecNumber>
    </recommendedName>
    <alternativeName>
        <fullName evidence="1">ATP-dependent NAD kinase</fullName>
    </alternativeName>
</protein>